<comment type="function">
    <text evidence="1">Tyrosine-protein kinase that acts as a cell-surface receptor for the cytokine KITLG/SCF and plays an essential role in the regulation of cell survival and proliferation, hematopoiesis, stem cell maintenance, gametogenesis, mast cell development, migration and function, and in melanogenesis. In response to KITLG/SCF binding, KIT can activate several signaling pathways. Phosphorylates PIK3R1, PLCG1, SH2B2/APS and CBL. Activates the AKT1 signaling pathway by phosphorylation of PIK3R1, the regulatory subunit of phosphatidylinositol 3-kinase. Activated KIT also transmits signals via GRB2 and activation of RAS, RAF1 and the MAP kinases MAPK1/ERK2 and/or MAPK3/ERK1. Promotes activation of STAT family members STAT1, STAT3, STAT5A and STAT5B. Activation of PLCG1 leads to the production of the cellular signaling molecules diacylglycerol and inositol 1,4,5-trisphosphate. KIT signaling is modulated by protein phosphatases, and by rapid internalization and degradation of the receptor. Activated KIT promotes phosphorylation of the protein phosphatases PTPN6/SHP-1 and PTPRU, and of the transcription factors STAT1, STAT3, STAT5A and STAT5B. Promotes phosphorylation of PIK3R1, CBL, CRK (isoform Crk-II), LYN, MAPK1/ERK2 and/or MAPK3/ERK1, PLCG1, SRC and SHC1 (By similarity).</text>
</comment>
<comment type="catalytic activity">
    <reaction evidence="7">
        <text>L-tyrosyl-[protein] + ATP = O-phospho-L-tyrosyl-[protein] + ADP + H(+)</text>
        <dbReference type="Rhea" id="RHEA:10596"/>
        <dbReference type="Rhea" id="RHEA-COMP:10136"/>
        <dbReference type="Rhea" id="RHEA-COMP:20101"/>
        <dbReference type="ChEBI" id="CHEBI:15378"/>
        <dbReference type="ChEBI" id="CHEBI:30616"/>
        <dbReference type="ChEBI" id="CHEBI:46858"/>
        <dbReference type="ChEBI" id="CHEBI:61978"/>
        <dbReference type="ChEBI" id="CHEBI:456216"/>
        <dbReference type="EC" id="2.7.10.1"/>
    </reaction>
</comment>
<comment type="activity regulation">
    <text evidence="1">Present in an inactive conformation in the absence of bound ligand. KITLG/SCF binding leads to dimerization and activation by autophosphorylation on tyrosine residues. Activity is down-regulated by PRKCA-mediated phosphorylation on serine residues (By similarity).</text>
</comment>
<comment type="subunit">
    <text evidence="2 3">Monomer in the absence of bound KITLG/SCF. Homodimer in the presence of bound KITLG/SCF, forming a heterotetramer with two KITLG/SCF molecules. Interacts (via phosphorylated tyrosine residues) with the adapter proteins GRB2 and GRB7 (via SH2 domain), and SH2B2/APS. Interacts (via C-terminus) with MPDZ (via the tenth PDZ domain). Interacts (via phosphorylated tyrosine residues) with PIK3R1 and PIK3CD. Interacts (via phosphorylated tyrosine) with CRK (isoform Crk-II), FYN, SHC1 and MATK/CHK (via SH2 domain). Interacts with LYN and FES/FPS. Interacts (via phosphorylated tyrosine residues) with the protein phosphatases PTPN6/SHP-1 (via SH2 domain), PTPN11/SHP-2 (via SH2 domain) and PTPRU. Interacts with PLCG1. Interacts with DOK1 and TEC. Interacts with IL1RAP (independent of stimulation with KITLG/SCF). A mast cell-specific KITLG/SCF-induced interleukin-33 signaling complex contains IL1RL1, IL1RAP, KIT and MYD88 (By similarity).</text>
</comment>
<comment type="subcellular location">
    <subcellularLocation>
        <location>Cell membrane</location>
        <topology>Single-pass type I membrane protein</topology>
    </subcellularLocation>
</comment>
<comment type="PTM">
    <text evidence="1">Ubiquitinated by SOCS6. KIT is rapidly ubiquitinated after autophosphorylation induced by KITLG/SCF binding, leading to internalization and degradation.</text>
</comment>
<comment type="PTM">
    <text evidence="1">Autophosphorylated on tyrosine residues. KITLG/SCF binding promotes autophosphorylation. Phosphorylated tyrosine residues are important for interaction with specific binding partners (By similarity).</text>
</comment>
<comment type="miscellaneous">
    <text evidence="1">Numerous proteins are phosphorylated in response to KIT signaling, but it is not evident to determine which are directly phosphorylated by KIT under in vivo conditions.</text>
</comment>
<comment type="similarity">
    <text evidence="6">Belongs to the protein kinase superfamily. Tyr protein kinase family. CSF-1/PDGF receptor subfamily.</text>
</comment>
<proteinExistence type="evidence at transcript level"/>
<feature type="signal peptide" evidence="4">
    <location>
        <begin position="1"/>
        <end position="25"/>
    </location>
</feature>
<feature type="chain" id="PRO_0000016752" description="Mast/stem cell growth factor receptor Kit">
    <location>
        <begin position="26"/>
        <end position="978"/>
    </location>
</feature>
<feature type="topological domain" description="Extracellular" evidence="4">
    <location>
        <begin position="26"/>
        <end position="525"/>
    </location>
</feature>
<feature type="transmembrane region" description="Helical" evidence="4">
    <location>
        <begin position="526"/>
        <end position="546"/>
    </location>
</feature>
<feature type="topological domain" description="Cytoplasmic" evidence="4">
    <location>
        <begin position="547"/>
        <end position="978"/>
    </location>
</feature>
<feature type="domain" description="Ig-like C2-type 1">
    <location>
        <begin position="27"/>
        <end position="112"/>
    </location>
</feature>
<feature type="domain" description="Ig-like C2-type 2">
    <location>
        <begin position="121"/>
        <end position="205"/>
    </location>
</feature>
<feature type="domain" description="Ig-like C2-type 3">
    <location>
        <begin position="212"/>
        <end position="309"/>
    </location>
</feature>
<feature type="domain" description="Ig-like C2-type 4">
    <location>
        <begin position="318"/>
        <end position="411"/>
    </location>
</feature>
<feature type="domain" description="Ig-like C2-type 5">
    <location>
        <begin position="414"/>
        <end position="508"/>
    </location>
</feature>
<feature type="domain" description="Protein kinase" evidence="6">
    <location>
        <begin position="590"/>
        <end position="939"/>
    </location>
</feature>
<feature type="region of interest" description="Important for interaction with phosphotyrosine-binding proteins" evidence="1">
    <location>
        <begin position="569"/>
        <end position="571"/>
    </location>
</feature>
<feature type="active site" description="Proton acceptor" evidence="6 7">
    <location>
        <position position="794"/>
    </location>
</feature>
<feature type="binding site" evidence="1">
    <location>
        <position position="569"/>
    </location>
    <ligand>
        <name>Mg(2+)</name>
        <dbReference type="ChEBI" id="CHEBI:18420"/>
    </ligand>
</feature>
<feature type="binding site" evidence="6">
    <location>
        <begin position="597"/>
        <end position="604"/>
    </location>
    <ligand>
        <name>ATP</name>
        <dbReference type="ChEBI" id="CHEBI:30616"/>
    </ligand>
</feature>
<feature type="binding site" evidence="6">
    <location>
        <position position="624"/>
    </location>
    <ligand>
        <name>ATP</name>
        <dbReference type="ChEBI" id="CHEBI:30616"/>
    </ligand>
</feature>
<feature type="binding site" evidence="6">
    <location>
        <begin position="672"/>
        <end position="678"/>
    </location>
    <ligand>
        <name>ATP</name>
        <dbReference type="ChEBI" id="CHEBI:30616"/>
    </ligand>
</feature>
<feature type="binding site" evidence="6">
    <location>
        <position position="798"/>
    </location>
    <ligand>
        <name>ATP</name>
        <dbReference type="ChEBI" id="CHEBI:30616"/>
    </ligand>
</feature>
<feature type="binding site" evidence="1">
    <location>
        <position position="799"/>
    </location>
    <ligand>
        <name>Mg(2+)</name>
        <dbReference type="ChEBI" id="CHEBI:18420"/>
    </ligand>
</feature>
<feature type="binding site" evidence="1">
    <location>
        <position position="812"/>
    </location>
    <ligand>
        <name>Mg(2+)</name>
        <dbReference type="ChEBI" id="CHEBI:18420"/>
    </ligand>
</feature>
<feature type="site" description="Interaction with SH2B2/APS" evidence="1">
    <location>
        <position position="569"/>
    </location>
</feature>
<feature type="site" description="Important for interaction with phosphotyrosine-binding proteins" evidence="1">
    <location>
        <position position="938"/>
    </location>
</feature>
<feature type="site" description="Interaction with SH2B2/APS" evidence="1">
    <location>
        <position position="938"/>
    </location>
</feature>
<feature type="modified residue" description="Phosphotyrosine" evidence="3">
    <location>
        <position position="548"/>
    </location>
</feature>
<feature type="modified residue" description="Phosphotyrosine" evidence="3">
    <location>
        <position position="554"/>
    </location>
</feature>
<feature type="modified residue" description="Phosphotyrosine; by autocatalysis" evidence="3">
    <location>
        <position position="569"/>
    </location>
</feature>
<feature type="modified residue" description="Phosphotyrosine; by autocatalysis" evidence="3">
    <location>
        <position position="571"/>
    </location>
</feature>
<feature type="modified residue" description="Phosphotyrosine; by autocatalysis" evidence="3">
    <location>
        <position position="704"/>
    </location>
</feature>
<feature type="modified residue" description="Phosphotyrosine; by autocatalysis" evidence="3">
    <location>
        <position position="722"/>
    </location>
</feature>
<feature type="modified residue" description="Phosphotyrosine" evidence="3">
    <location>
        <position position="731"/>
    </location>
</feature>
<feature type="modified residue" description="Phosphoserine; by PKC/PRKCA" evidence="3">
    <location>
        <position position="743"/>
    </location>
</feature>
<feature type="modified residue" description="Phosphoserine; by PKC/PRKCA" evidence="3">
    <location>
        <position position="748"/>
    </location>
</feature>
<feature type="modified residue" description="Phosphoserine" evidence="3">
    <location>
        <position position="823"/>
    </location>
</feature>
<feature type="modified residue" description="Phosphotyrosine; by autocatalysis" evidence="3">
    <location>
        <position position="825"/>
    </location>
</feature>
<feature type="modified residue" description="Phosphoserine" evidence="3">
    <location>
        <position position="893"/>
    </location>
</feature>
<feature type="modified residue" description="Phosphotyrosine" evidence="3">
    <location>
        <position position="902"/>
    </location>
</feature>
<feature type="modified residue" description="Phosphotyrosine; by autocatalysis" evidence="3">
    <location>
        <position position="938"/>
    </location>
</feature>
<feature type="modified residue" description="Phosphoserine" evidence="3">
    <location>
        <position position="961"/>
    </location>
</feature>
<feature type="glycosylation site" description="N-linked (GlcNAc...) asparagine" evidence="4">
    <location>
        <position position="94"/>
    </location>
</feature>
<feature type="glycosylation site" description="N-linked (GlcNAc...) asparagine" evidence="4">
    <location>
        <position position="130"/>
    </location>
</feature>
<feature type="glycosylation site" description="N-linked (GlcNAc...) asparagine" evidence="4">
    <location>
        <position position="145"/>
    </location>
</feature>
<feature type="glycosylation site" description="N-linked (GlcNAc...) asparagine" evidence="4">
    <location>
        <position position="284"/>
    </location>
</feature>
<feature type="glycosylation site" description="N-linked (GlcNAc...) asparagine" evidence="4">
    <location>
        <position position="294"/>
    </location>
</feature>
<feature type="glycosylation site" description="N-linked (GlcNAc...) asparagine" evidence="4">
    <location>
        <position position="301"/>
    </location>
</feature>
<feature type="glycosylation site" description="N-linked (GlcNAc...) asparagine" evidence="4">
    <location>
        <position position="321"/>
    </location>
</feature>
<feature type="glycosylation site" description="N-linked (GlcNAc...) asparagine" evidence="4">
    <location>
        <position position="353"/>
    </location>
</feature>
<feature type="glycosylation site" description="N-linked (GlcNAc...) asparagine" evidence="4">
    <location>
        <position position="368"/>
    </location>
</feature>
<feature type="glycosylation site" description="N-linked (GlcNAc...) asparagine" evidence="4">
    <location>
        <position position="401"/>
    </location>
</feature>
<feature type="glycosylation site" description="N-linked (GlcNAc...) asparagine" evidence="4">
    <location>
        <position position="464"/>
    </location>
</feature>
<feature type="glycosylation site" description="N-linked (GlcNAc...) asparagine" evidence="4">
    <location>
        <position position="487"/>
    </location>
</feature>
<feature type="disulfide bond" evidence="5">
    <location>
        <begin position="58"/>
        <end position="97"/>
    </location>
</feature>
<feature type="disulfide bond" evidence="5">
    <location>
        <begin position="136"/>
        <end position="186"/>
    </location>
</feature>
<feature type="disulfide bond" evidence="5">
    <location>
        <begin position="151"/>
        <end position="183"/>
    </location>
</feature>
<feature type="disulfide bond" evidence="5">
    <location>
        <begin position="233"/>
        <end position="291"/>
    </location>
</feature>
<feature type="disulfide bond" evidence="5">
    <location>
        <begin position="429"/>
        <end position="492"/>
    </location>
</feature>
<sequence length="978" mass="109722">MRGARGAWDFLFVLLLLLLVQTGSSQPSVSPGELSLPSIHPAKSELIVSVGDEIRLLCTDPGFVKWTFEILGQLSEKTNPEWITEKAEATNTGNYTCTNKGGLSSSIYVFVRDPEKLFLIDLPLYGKEENDTLVRCPLTDPEVTNYSLTGCEGKPLPKDLTFVADPKAGITIRNVKREYHRLCLHCSANQKGKSMLSKKFTLKVRAAIKAVPVVSVSKTSYLLREGEEFAVTCLIKDVSSSVDSMWIKENSQQSKAQTKKNSWHQGDFSYLRQERLTISSARVNDSGVFMCYANNTFGSANVTTTLEVVDKGFINIFPMMNTTVFVNDGENVDLVVEYEAYPKPEHRQWIYMNRTSTDKWDDYPKSENESNIRYVNELHLTRLKGTEGGTYTFHVSNSDVNSSVTFNVNVNTKPEILTHDRLVNGMLQCVAAGFPEPTIDWYFCPGTEQRCSVPVGPVDVQIQNSSVSPFGKLVVYSTIDDSTFKHNGTVECRAYNDVGKSSASFNFAFKGNNKEQIHAHTLFTPLLIGFVIAAGLMCIFVMILTYKYLQKPMYEVQWKVVEEINGNNYVYIDPTQLPYDHKWEFPRNRLSFGKTLGAGAFGKVVEATAYGLIKSDAAMTVAVKMLKPSAHLTEREALMSELKVLSYLGNHMNIVNLLGACTIGGPTLVITEYCCYGDLLNFLRRKRDSFICSKQEDHAEVALYKNLLHSKESSCNDSTNEYMDMKPGVSYVVPTKAADKRRSARIGSYIERDVTPAIMEDDELALDLEDLLSFSYQVAKGMAFLASKNCIHRDLAARNILLTHGRITKICDFGLARDIKNDSNYVVKGNARLPVKWMAPESIFNCVYTFESDVWSYGIFLWELFSLGSSPYPGMPVDSKFYKMIKEGFRMLSPEHAPAEMYDIMKTCWDADPLKRPTFKQIVQLIEKQISESTNHIYSNLANCSPHRENPAVDHSVRINSVGSSASSTQPLLVHEDV</sequence>
<evidence type="ECO:0000250" key="1"/>
<evidence type="ECO:0000250" key="2">
    <source>
        <dbReference type="UniProtKB" id="P05532"/>
    </source>
</evidence>
<evidence type="ECO:0000250" key="3">
    <source>
        <dbReference type="UniProtKB" id="P10721"/>
    </source>
</evidence>
<evidence type="ECO:0000255" key="4"/>
<evidence type="ECO:0000255" key="5">
    <source>
        <dbReference type="PROSITE-ProRule" id="PRU00114"/>
    </source>
</evidence>
<evidence type="ECO:0000255" key="6">
    <source>
        <dbReference type="PROSITE-ProRule" id="PRU00159"/>
    </source>
</evidence>
<evidence type="ECO:0000255" key="7">
    <source>
        <dbReference type="PROSITE-ProRule" id="PRU10028"/>
    </source>
</evidence>
<organism>
    <name type="scientific">Capra hircus</name>
    <name type="common">Goat</name>
    <dbReference type="NCBI Taxonomy" id="9925"/>
    <lineage>
        <taxon>Eukaryota</taxon>
        <taxon>Metazoa</taxon>
        <taxon>Chordata</taxon>
        <taxon>Craniata</taxon>
        <taxon>Vertebrata</taxon>
        <taxon>Euteleostomi</taxon>
        <taxon>Mammalia</taxon>
        <taxon>Eutheria</taxon>
        <taxon>Laurasiatheria</taxon>
        <taxon>Artiodactyla</taxon>
        <taxon>Ruminantia</taxon>
        <taxon>Pecora</taxon>
        <taxon>Bovidae</taxon>
        <taxon>Caprinae</taxon>
        <taxon>Capra</taxon>
    </lineage>
</organism>
<dbReference type="EC" id="2.7.10.1"/>
<dbReference type="EMBL" id="D45168">
    <property type="protein sequence ID" value="BAA08116.1"/>
    <property type="molecule type" value="mRNA"/>
</dbReference>
<dbReference type="RefSeq" id="NP_001272653.1">
    <property type="nucleotide sequence ID" value="NM_001285724.1"/>
</dbReference>
<dbReference type="SMR" id="Q28317"/>
<dbReference type="STRING" id="9925.ENSCHIP00000025751"/>
<dbReference type="GlyCosmos" id="Q28317">
    <property type="glycosylation" value="12 sites, No reported glycans"/>
</dbReference>
<dbReference type="GeneID" id="100861386"/>
<dbReference type="KEGG" id="chx:100861386"/>
<dbReference type="CTD" id="3815"/>
<dbReference type="OrthoDB" id="6077854at2759"/>
<dbReference type="BRENDA" id="2.7.10.1">
    <property type="organism ID" value="1166"/>
</dbReference>
<dbReference type="Proteomes" id="UP000291000">
    <property type="component" value="Unassembled WGS sequence"/>
</dbReference>
<dbReference type="Proteomes" id="UP000694566">
    <property type="component" value="Unplaced"/>
</dbReference>
<dbReference type="GO" id="GO:0005886">
    <property type="term" value="C:plasma membrane"/>
    <property type="evidence" value="ECO:0007669"/>
    <property type="project" value="UniProtKB-SubCell"/>
</dbReference>
<dbReference type="GO" id="GO:0043235">
    <property type="term" value="C:receptor complex"/>
    <property type="evidence" value="ECO:0007669"/>
    <property type="project" value="TreeGrafter"/>
</dbReference>
<dbReference type="GO" id="GO:0005524">
    <property type="term" value="F:ATP binding"/>
    <property type="evidence" value="ECO:0007669"/>
    <property type="project" value="UniProtKB-KW"/>
</dbReference>
<dbReference type="GO" id="GO:0019955">
    <property type="term" value="F:cytokine binding"/>
    <property type="evidence" value="ECO:0000250"/>
    <property type="project" value="UniProtKB"/>
</dbReference>
<dbReference type="GO" id="GO:0019838">
    <property type="term" value="F:growth factor binding"/>
    <property type="evidence" value="ECO:0007669"/>
    <property type="project" value="TreeGrafter"/>
</dbReference>
<dbReference type="GO" id="GO:0046872">
    <property type="term" value="F:metal ion binding"/>
    <property type="evidence" value="ECO:0007669"/>
    <property type="project" value="UniProtKB-KW"/>
</dbReference>
<dbReference type="GO" id="GO:0004714">
    <property type="term" value="F:transmembrane receptor protein tyrosine kinase activity"/>
    <property type="evidence" value="ECO:0000250"/>
    <property type="project" value="UniProtKB"/>
</dbReference>
<dbReference type="GO" id="GO:0030036">
    <property type="term" value="P:actin cytoskeleton organization"/>
    <property type="evidence" value="ECO:0000250"/>
    <property type="project" value="UniProtKB"/>
</dbReference>
<dbReference type="GO" id="GO:0060326">
    <property type="term" value="P:cell chemotaxis"/>
    <property type="evidence" value="ECO:0000250"/>
    <property type="project" value="UniProtKB"/>
</dbReference>
<dbReference type="GO" id="GO:0019221">
    <property type="term" value="P:cytokine-mediated signaling pathway"/>
    <property type="evidence" value="ECO:0000250"/>
    <property type="project" value="UniProtKB"/>
</dbReference>
<dbReference type="GO" id="GO:0050910">
    <property type="term" value="P:detection of mechanical stimulus involved in sensory perception of sound"/>
    <property type="evidence" value="ECO:0000250"/>
    <property type="project" value="UniProtKB"/>
</dbReference>
<dbReference type="GO" id="GO:0048565">
    <property type="term" value="P:digestive tract development"/>
    <property type="evidence" value="ECO:0000250"/>
    <property type="project" value="UniProtKB"/>
</dbReference>
<dbReference type="GO" id="GO:0035162">
    <property type="term" value="P:embryonic hemopoiesis"/>
    <property type="evidence" value="ECO:0000250"/>
    <property type="project" value="UniProtKB"/>
</dbReference>
<dbReference type="GO" id="GO:0030218">
    <property type="term" value="P:erythrocyte differentiation"/>
    <property type="evidence" value="ECO:0000250"/>
    <property type="project" value="UniProtKB"/>
</dbReference>
<dbReference type="GO" id="GO:0038162">
    <property type="term" value="P:erythropoietin-mediated signaling pathway"/>
    <property type="evidence" value="ECO:0000250"/>
    <property type="project" value="UniProtKB"/>
</dbReference>
<dbReference type="GO" id="GO:0038093">
    <property type="term" value="P:Fc receptor signaling pathway"/>
    <property type="evidence" value="ECO:0000250"/>
    <property type="project" value="UniProtKB"/>
</dbReference>
<dbReference type="GO" id="GO:0002244">
    <property type="term" value="P:hematopoietic progenitor cell differentiation"/>
    <property type="evidence" value="ECO:0007669"/>
    <property type="project" value="TreeGrafter"/>
</dbReference>
<dbReference type="GO" id="GO:0002327">
    <property type="term" value="P:immature B cell differentiation"/>
    <property type="evidence" value="ECO:0000250"/>
    <property type="project" value="UniProtKB"/>
</dbReference>
<dbReference type="GO" id="GO:0006954">
    <property type="term" value="P:inflammatory response"/>
    <property type="evidence" value="ECO:0000250"/>
    <property type="project" value="UniProtKB"/>
</dbReference>
<dbReference type="GO" id="GO:0038109">
    <property type="term" value="P:Kit signaling pathway"/>
    <property type="evidence" value="ECO:0000250"/>
    <property type="project" value="UniProtKB"/>
</dbReference>
<dbReference type="GO" id="GO:0030032">
    <property type="term" value="P:lamellipodium assembly"/>
    <property type="evidence" value="ECO:0000250"/>
    <property type="project" value="UniProtKB"/>
</dbReference>
<dbReference type="GO" id="GO:0043303">
    <property type="term" value="P:mast cell degranulation"/>
    <property type="evidence" value="ECO:0000250"/>
    <property type="project" value="UniProtKB"/>
</dbReference>
<dbReference type="GO" id="GO:0060374">
    <property type="term" value="P:mast cell differentiation"/>
    <property type="evidence" value="ECO:0000250"/>
    <property type="project" value="UniProtKB"/>
</dbReference>
<dbReference type="GO" id="GO:0035855">
    <property type="term" value="P:megakaryocyte development"/>
    <property type="evidence" value="ECO:0000250"/>
    <property type="project" value="UniProtKB"/>
</dbReference>
<dbReference type="GO" id="GO:0097326">
    <property type="term" value="P:melanocyte adhesion"/>
    <property type="evidence" value="ECO:0000250"/>
    <property type="project" value="UniProtKB"/>
</dbReference>
<dbReference type="GO" id="GO:0030318">
    <property type="term" value="P:melanocyte differentiation"/>
    <property type="evidence" value="ECO:0000250"/>
    <property type="project" value="UniProtKB"/>
</dbReference>
<dbReference type="GO" id="GO:0097324">
    <property type="term" value="P:melanocyte migration"/>
    <property type="evidence" value="ECO:0000250"/>
    <property type="project" value="UniProtKB"/>
</dbReference>
<dbReference type="GO" id="GO:0001541">
    <property type="term" value="P:ovarian follicle development"/>
    <property type="evidence" value="ECO:0000250"/>
    <property type="project" value="UniProtKB"/>
</dbReference>
<dbReference type="GO" id="GO:0043473">
    <property type="term" value="P:pigmentation"/>
    <property type="evidence" value="ECO:0000250"/>
    <property type="project" value="UniProtKB"/>
</dbReference>
<dbReference type="GO" id="GO:0030335">
    <property type="term" value="P:positive regulation of cell migration"/>
    <property type="evidence" value="ECO:0007669"/>
    <property type="project" value="TreeGrafter"/>
</dbReference>
<dbReference type="GO" id="GO:0002732">
    <property type="term" value="P:positive regulation of dendritic cell cytokine production"/>
    <property type="evidence" value="ECO:0000250"/>
    <property type="project" value="UniProtKB"/>
</dbReference>
<dbReference type="GO" id="GO:0032765">
    <property type="term" value="P:positive regulation of mast cell cytokine production"/>
    <property type="evidence" value="ECO:0000250"/>
    <property type="project" value="UniProtKB"/>
</dbReference>
<dbReference type="GO" id="GO:0046427">
    <property type="term" value="P:positive regulation of receptor signaling pathway via JAK-STAT"/>
    <property type="evidence" value="ECO:0007669"/>
    <property type="project" value="TreeGrafter"/>
</dbReference>
<dbReference type="GO" id="GO:0008360">
    <property type="term" value="P:regulation of cell shape"/>
    <property type="evidence" value="ECO:0000250"/>
    <property type="project" value="UniProtKB"/>
</dbReference>
<dbReference type="GO" id="GO:0007283">
    <property type="term" value="P:spermatogenesis"/>
    <property type="evidence" value="ECO:0000250"/>
    <property type="project" value="UniProtKB"/>
</dbReference>
<dbReference type="GO" id="GO:0048863">
    <property type="term" value="P:stem cell differentiation"/>
    <property type="evidence" value="ECO:0000250"/>
    <property type="project" value="UniProtKB"/>
</dbReference>
<dbReference type="GO" id="GO:0030217">
    <property type="term" value="P:T cell differentiation"/>
    <property type="evidence" value="ECO:0000250"/>
    <property type="project" value="UniProtKB"/>
</dbReference>
<dbReference type="CDD" id="cd00096">
    <property type="entry name" value="Ig"/>
    <property type="match status" value="1"/>
</dbReference>
<dbReference type="CDD" id="cd05860">
    <property type="entry name" value="IgI_4_SCFR"/>
    <property type="match status" value="1"/>
</dbReference>
<dbReference type="CDD" id="cd05104">
    <property type="entry name" value="PTKc_Kit"/>
    <property type="match status" value="1"/>
</dbReference>
<dbReference type="FunFam" id="1.10.510.10:FF:000177">
    <property type="entry name" value="Mast/stem cell growth factor receptor"/>
    <property type="match status" value="1"/>
</dbReference>
<dbReference type="FunFam" id="2.60.40.10:FF:000422">
    <property type="entry name" value="Mast/stem cell growth factor receptor"/>
    <property type="match status" value="1"/>
</dbReference>
<dbReference type="FunFam" id="2.60.40.10:FF:000429">
    <property type="entry name" value="Mast/stem cell growth factor receptor"/>
    <property type="match status" value="1"/>
</dbReference>
<dbReference type="FunFam" id="2.60.40.10:FF:000469">
    <property type="entry name" value="Mast/stem cell growth factor receptor"/>
    <property type="match status" value="1"/>
</dbReference>
<dbReference type="FunFam" id="2.60.40.10:FF:000544">
    <property type="entry name" value="Mast/stem cell growth factor receptor"/>
    <property type="match status" value="1"/>
</dbReference>
<dbReference type="FunFam" id="2.60.40.10:FF:000815">
    <property type="entry name" value="Mast/stem cell growth factor receptor"/>
    <property type="match status" value="1"/>
</dbReference>
<dbReference type="FunFam" id="3.30.200.20:FF:000025">
    <property type="entry name" value="Platelet-derived growth factor receptor alpha"/>
    <property type="match status" value="1"/>
</dbReference>
<dbReference type="Gene3D" id="2.60.40.10">
    <property type="entry name" value="Immunoglobulins"/>
    <property type="match status" value="5"/>
</dbReference>
<dbReference type="Gene3D" id="3.30.200.20">
    <property type="entry name" value="Phosphorylase Kinase, domain 1"/>
    <property type="match status" value="1"/>
</dbReference>
<dbReference type="Gene3D" id="1.10.510.10">
    <property type="entry name" value="Transferase(Phosphotransferase) domain 1"/>
    <property type="match status" value="1"/>
</dbReference>
<dbReference type="InterPro" id="IPR007110">
    <property type="entry name" value="Ig-like_dom"/>
</dbReference>
<dbReference type="InterPro" id="IPR036179">
    <property type="entry name" value="Ig-like_dom_sf"/>
</dbReference>
<dbReference type="InterPro" id="IPR013783">
    <property type="entry name" value="Ig-like_fold"/>
</dbReference>
<dbReference type="InterPro" id="IPR003599">
    <property type="entry name" value="Ig_sub"/>
</dbReference>
<dbReference type="InterPro" id="IPR003598">
    <property type="entry name" value="Ig_sub2"/>
</dbReference>
<dbReference type="InterPro" id="IPR013151">
    <property type="entry name" value="Immunoglobulin_dom"/>
</dbReference>
<dbReference type="InterPro" id="IPR011009">
    <property type="entry name" value="Kinase-like_dom_sf"/>
</dbReference>
<dbReference type="InterPro" id="IPR000719">
    <property type="entry name" value="Prot_kinase_dom"/>
</dbReference>
<dbReference type="InterPro" id="IPR017441">
    <property type="entry name" value="Protein_kinase_ATP_BS"/>
</dbReference>
<dbReference type="InterPro" id="IPR050122">
    <property type="entry name" value="RTK"/>
</dbReference>
<dbReference type="InterPro" id="IPR027263">
    <property type="entry name" value="SCGF_receptor"/>
</dbReference>
<dbReference type="InterPro" id="IPR001245">
    <property type="entry name" value="Ser-Thr/Tyr_kinase_cat_dom"/>
</dbReference>
<dbReference type="InterPro" id="IPR008266">
    <property type="entry name" value="Tyr_kinase_AS"/>
</dbReference>
<dbReference type="InterPro" id="IPR020635">
    <property type="entry name" value="Tyr_kinase_cat_dom"/>
</dbReference>
<dbReference type="InterPro" id="IPR001824">
    <property type="entry name" value="Tyr_kinase_rcpt_3_CS"/>
</dbReference>
<dbReference type="PANTHER" id="PTHR24416:SF46">
    <property type="entry name" value="MAST_STEM CELL GROWTH FACTOR RECEPTOR KIT"/>
    <property type="match status" value="1"/>
</dbReference>
<dbReference type="PANTHER" id="PTHR24416">
    <property type="entry name" value="TYROSINE-PROTEIN KINASE RECEPTOR"/>
    <property type="match status" value="1"/>
</dbReference>
<dbReference type="Pfam" id="PF00047">
    <property type="entry name" value="ig"/>
    <property type="match status" value="1"/>
</dbReference>
<dbReference type="Pfam" id="PF07714">
    <property type="entry name" value="PK_Tyr_Ser-Thr"/>
    <property type="match status" value="1"/>
</dbReference>
<dbReference type="PIRSF" id="PIRSF500951">
    <property type="entry name" value="SCGF_recepter"/>
    <property type="match status" value="1"/>
</dbReference>
<dbReference type="PIRSF" id="PIRSF000615">
    <property type="entry name" value="TyrPK_CSF1-R"/>
    <property type="match status" value="1"/>
</dbReference>
<dbReference type="SMART" id="SM00409">
    <property type="entry name" value="IG"/>
    <property type="match status" value="4"/>
</dbReference>
<dbReference type="SMART" id="SM00408">
    <property type="entry name" value="IGc2"/>
    <property type="match status" value="2"/>
</dbReference>
<dbReference type="SMART" id="SM00219">
    <property type="entry name" value="TyrKc"/>
    <property type="match status" value="1"/>
</dbReference>
<dbReference type="SUPFAM" id="SSF48726">
    <property type="entry name" value="Immunoglobulin"/>
    <property type="match status" value="3"/>
</dbReference>
<dbReference type="SUPFAM" id="SSF56112">
    <property type="entry name" value="Protein kinase-like (PK-like)"/>
    <property type="match status" value="1"/>
</dbReference>
<dbReference type="PROSITE" id="PS50835">
    <property type="entry name" value="IG_LIKE"/>
    <property type="match status" value="2"/>
</dbReference>
<dbReference type="PROSITE" id="PS00107">
    <property type="entry name" value="PROTEIN_KINASE_ATP"/>
    <property type="match status" value="1"/>
</dbReference>
<dbReference type="PROSITE" id="PS50011">
    <property type="entry name" value="PROTEIN_KINASE_DOM"/>
    <property type="match status" value="1"/>
</dbReference>
<dbReference type="PROSITE" id="PS00109">
    <property type="entry name" value="PROTEIN_KINASE_TYR"/>
    <property type="match status" value="1"/>
</dbReference>
<dbReference type="PROSITE" id="PS00240">
    <property type="entry name" value="RECEPTOR_TYR_KIN_III"/>
    <property type="match status" value="1"/>
</dbReference>
<accession>Q28317</accession>
<reference key="1">
    <citation type="journal article" date="1997" name="Biochim. Biophys. Acta">
        <title>Molecular cloning of cDNA encoding the c-kit receptor of Shiba goats and a novel alanine insertion specific to goats and sheep in the kinase insert region.</title>
        <authorList>
            <person name="Tanaka S."/>
            <person name="Yanagisawa N."/>
            <person name="Tojo H."/>
            <person name="Kim Y.-J."/>
            <person name="Tsujimura T."/>
            <person name="Kitamura Y."/>
            <person name="Sawasaki T."/>
            <person name="Tachi C."/>
        </authorList>
    </citation>
    <scope>NUCLEOTIDE SEQUENCE [MRNA]</scope>
    <source>
        <strain>Shiba</strain>
        <tissue>Cerebellum</tissue>
    </source>
</reference>
<protein>
    <recommendedName>
        <fullName>Mast/stem cell growth factor receptor Kit</fullName>
        <shortName>SCFR</shortName>
        <ecNumber>2.7.10.1</ecNumber>
    </recommendedName>
    <alternativeName>
        <fullName>Proto-oncogene c-Kit</fullName>
    </alternativeName>
    <alternativeName>
        <fullName>Tyrosine-protein kinase Kit</fullName>
    </alternativeName>
    <cdAntigenName>CD117</cdAntigenName>
</protein>
<gene>
    <name type="primary">KIT</name>
</gene>
<keyword id="KW-0067">ATP-binding</keyword>
<keyword id="KW-1003">Cell membrane</keyword>
<keyword id="KW-1015">Disulfide bond</keyword>
<keyword id="KW-0325">Glycoprotein</keyword>
<keyword id="KW-0393">Immunoglobulin domain</keyword>
<keyword id="KW-0418">Kinase</keyword>
<keyword id="KW-0460">Magnesium</keyword>
<keyword id="KW-0472">Membrane</keyword>
<keyword id="KW-0479">Metal-binding</keyword>
<keyword id="KW-0547">Nucleotide-binding</keyword>
<keyword id="KW-0597">Phosphoprotein</keyword>
<keyword id="KW-0656">Proto-oncogene</keyword>
<keyword id="KW-0675">Receptor</keyword>
<keyword id="KW-1185">Reference proteome</keyword>
<keyword id="KW-0677">Repeat</keyword>
<keyword id="KW-0732">Signal</keyword>
<keyword id="KW-0808">Transferase</keyword>
<keyword id="KW-0812">Transmembrane</keyword>
<keyword id="KW-1133">Transmembrane helix</keyword>
<keyword id="KW-0829">Tyrosine-protein kinase</keyword>
<keyword id="KW-0832">Ubl conjugation</keyword>
<name>KIT_CAPHI</name>